<name>PCYOX_RAT</name>
<sequence>MGRFAATLVGSLFGLGLLLCGLGRLASAEPRAPPEKIAIVGAGIGGTSSAYYLRKKFGKDVKIDVFEREEIGGRLATLKVQGHDYEAGGSVIHPLNLHMKRFVKELGLSSVPASGGLVGVYNGKSLVFEESSWFIINVIKLVWRYGFQSLRMHMWVEDLLDKFMRIYRYQSHDYAFSSVEKLMYAIGGDDYVRLLNQTLRENLKKAGFSETFLNEMIAPVMKVNFGQSTDLNAFVGAVSMTAADSNLWAVEGGNKVVCSGLLQASNSNLISGSVMSIEKTRTKQTGTPPKMYEVVYKTGSEIHSDFYDIVLVAAPLNRKMSNITFRNFDPPIEEFNDPYQQLVTTLIKGELNSTLFSSRHKDQFGLSAILVTDDSDMFINSLSIVASVSHKEGPPPAVDGMHVWKTFSKDILTKEQISKLFLSYDYAVRKPWLSYPYYNPPQKCPSIILHDRLYYLNGIEFAASCMEMSAIAGYNAALLAYHRWNGNEDMIDQDDLYEKLKTEL</sequence>
<dbReference type="EC" id="1.8.3.5" evidence="2"/>
<dbReference type="EMBL" id="AF332142">
    <property type="protein sequence ID" value="AAK16548.1"/>
    <property type="molecule type" value="mRNA"/>
</dbReference>
<dbReference type="EMBL" id="BC078719">
    <property type="protein sequence ID" value="AAH78719.1"/>
    <property type="molecule type" value="mRNA"/>
</dbReference>
<dbReference type="PIR" id="JC7782">
    <property type="entry name" value="JC7782"/>
</dbReference>
<dbReference type="RefSeq" id="NP_659553.1">
    <property type="nucleotide sequence ID" value="NM_145085.2"/>
</dbReference>
<dbReference type="SMR" id="Q99ML5"/>
<dbReference type="FunCoup" id="Q99ML5">
    <property type="interactions" value="1810"/>
</dbReference>
<dbReference type="STRING" id="10116.ENSRNOP00000022532"/>
<dbReference type="GlyCosmos" id="Q99ML5">
    <property type="glycosylation" value="3 sites, 9 glycans"/>
</dbReference>
<dbReference type="GlyGen" id="Q99ML5">
    <property type="glycosylation" value="4 sites, 9 N-linked glycans (2 sites)"/>
</dbReference>
<dbReference type="iPTMnet" id="Q99ML5"/>
<dbReference type="PhosphoSitePlus" id="Q99ML5"/>
<dbReference type="SwissPalm" id="Q99ML5"/>
<dbReference type="jPOST" id="Q99ML5"/>
<dbReference type="PaxDb" id="10116-ENSRNOP00000022532"/>
<dbReference type="GeneID" id="246302"/>
<dbReference type="KEGG" id="rno:246302"/>
<dbReference type="UCSC" id="RGD:628652">
    <property type="organism name" value="rat"/>
</dbReference>
<dbReference type="AGR" id="RGD:628652"/>
<dbReference type="CTD" id="51449"/>
<dbReference type="RGD" id="628652">
    <property type="gene designation" value="Pcyox1"/>
</dbReference>
<dbReference type="VEuPathDB" id="HostDB:ENSRNOG00000016704"/>
<dbReference type="eggNOG" id="ENOG502QSHJ">
    <property type="taxonomic scope" value="Eukaryota"/>
</dbReference>
<dbReference type="HOGENOM" id="CLU_021176_1_0_1"/>
<dbReference type="InParanoid" id="Q99ML5"/>
<dbReference type="OrthoDB" id="33661at9989"/>
<dbReference type="PhylomeDB" id="Q99ML5"/>
<dbReference type="TreeFam" id="TF329001"/>
<dbReference type="PRO" id="PR:Q99ML5"/>
<dbReference type="Proteomes" id="UP000002494">
    <property type="component" value="Chromosome 4"/>
</dbReference>
<dbReference type="Bgee" id="ENSRNOG00000016704">
    <property type="expression patterns" value="Expressed in skeletal muscle tissue and 18 other cell types or tissues"/>
</dbReference>
<dbReference type="GO" id="GO:0005764">
    <property type="term" value="C:lysosome"/>
    <property type="evidence" value="ECO:0000266"/>
    <property type="project" value="RGD"/>
</dbReference>
<dbReference type="GO" id="GO:0034361">
    <property type="term" value="C:very-low-density lipoprotein particle"/>
    <property type="evidence" value="ECO:0000266"/>
    <property type="project" value="RGD"/>
</dbReference>
<dbReference type="GO" id="GO:0071949">
    <property type="term" value="F:FAD binding"/>
    <property type="evidence" value="ECO:0000266"/>
    <property type="project" value="RGD"/>
</dbReference>
<dbReference type="GO" id="GO:0102149">
    <property type="term" value="F:farnesylcysteine lyase activity"/>
    <property type="evidence" value="ECO:0007669"/>
    <property type="project" value="RHEA"/>
</dbReference>
<dbReference type="GO" id="GO:0001735">
    <property type="term" value="F:prenylcysteine oxidase activity"/>
    <property type="evidence" value="ECO:0000266"/>
    <property type="project" value="RGD"/>
</dbReference>
<dbReference type="GO" id="GO:1902476">
    <property type="term" value="P:chloride transmembrane transport"/>
    <property type="evidence" value="ECO:0000315"/>
    <property type="project" value="RGD"/>
</dbReference>
<dbReference type="GO" id="GO:0030327">
    <property type="term" value="P:prenylated protein catabolic process"/>
    <property type="evidence" value="ECO:0000266"/>
    <property type="project" value="RGD"/>
</dbReference>
<dbReference type="GO" id="GO:0030328">
    <property type="term" value="P:prenylcysteine catabolic process"/>
    <property type="evidence" value="ECO:0000266"/>
    <property type="project" value="RGD"/>
</dbReference>
<dbReference type="FunFam" id="3.50.50.60:FF:000081">
    <property type="entry name" value="prenylcysteine oxidase 1"/>
    <property type="match status" value="1"/>
</dbReference>
<dbReference type="Gene3D" id="3.50.50.60">
    <property type="entry name" value="FAD/NAD(P)-binding domain"/>
    <property type="match status" value="1"/>
</dbReference>
<dbReference type="InterPro" id="IPR036188">
    <property type="entry name" value="FAD/NAD-bd_sf"/>
</dbReference>
<dbReference type="InterPro" id="IPR010795">
    <property type="entry name" value="Prenylcys_lyase"/>
</dbReference>
<dbReference type="InterPro" id="IPR017046">
    <property type="entry name" value="Prenylcysteine_Oxase1"/>
</dbReference>
<dbReference type="PANTHER" id="PTHR15944">
    <property type="entry name" value="FARNESYLCYSTEINE LYASE"/>
    <property type="match status" value="1"/>
</dbReference>
<dbReference type="PANTHER" id="PTHR15944:SF3">
    <property type="entry name" value="PRENYLCYSTEINE OXIDASE 1"/>
    <property type="match status" value="1"/>
</dbReference>
<dbReference type="Pfam" id="PF13450">
    <property type="entry name" value="NAD_binding_8"/>
    <property type="match status" value="1"/>
</dbReference>
<dbReference type="Pfam" id="PF07156">
    <property type="entry name" value="Prenylcys_lyase"/>
    <property type="match status" value="1"/>
</dbReference>
<dbReference type="PIRSF" id="PIRSF036292">
    <property type="entry name" value="Prenylcysteine_oxidase"/>
    <property type="match status" value="1"/>
</dbReference>
<dbReference type="SUPFAM" id="SSF51905">
    <property type="entry name" value="FAD/NAD(P)-binding domain"/>
    <property type="match status" value="1"/>
</dbReference>
<accession>Q99ML5</accession>
<proteinExistence type="evidence at protein level"/>
<comment type="function">
    <text evidence="1 2">Prenylcysteine oxidase that cleaves the thioether bond of prenyl-L-cysteines, such as farnesylcysteine and geranylgeranylcysteine (By similarity). Only active against free prenylcysteines and not prenylcysteine residues within prenylated proteins or peptides (By similarity). Involved in the final step in the degradation of prenylated proteins, by degrading prenylcysteines after the protein has been degraded (By similarity).</text>
</comment>
<comment type="catalytic activity">
    <reaction evidence="2">
        <text>an S-polyprenyl-L-cysteine + O2 + H2O = a polyprenal + L-cysteine + H2O2</text>
        <dbReference type="Rhea" id="RHEA:53892"/>
        <dbReference type="Rhea" id="RHEA-COMP:13675"/>
        <dbReference type="Rhea" id="RHEA-COMP:13676"/>
        <dbReference type="ChEBI" id="CHEBI:15377"/>
        <dbReference type="ChEBI" id="CHEBI:15379"/>
        <dbReference type="ChEBI" id="CHEBI:16240"/>
        <dbReference type="ChEBI" id="CHEBI:35235"/>
        <dbReference type="ChEBI" id="CHEBI:137934"/>
        <dbReference type="ChEBI" id="CHEBI:137935"/>
        <dbReference type="EC" id="1.8.3.5"/>
    </reaction>
    <physiologicalReaction direction="left-to-right" evidence="2">
        <dbReference type="Rhea" id="RHEA:53893"/>
    </physiologicalReaction>
</comment>
<comment type="catalytic activity">
    <reaction evidence="2">
        <text>S-(2E,6E)-farnesyl-L-cysteine + O2 + H2O = (2E,6E)-farnesal + L-cysteine + H2O2</text>
        <dbReference type="Rhea" id="RHEA:30231"/>
        <dbReference type="ChEBI" id="CHEBI:15377"/>
        <dbReference type="ChEBI" id="CHEBI:15379"/>
        <dbReference type="ChEBI" id="CHEBI:15894"/>
        <dbReference type="ChEBI" id="CHEBI:16240"/>
        <dbReference type="ChEBI" id="CHEBI:35235"/>
        <dbReference type="ChEBI" id="CHEBI:62141"/>
        <dbReference type="EC" id="1.8.3.5"/>
    </reaction>
    <physiologicalReaction direction="left-to-right" evidence="2">
        <dbReference type="Rhea" id="RHEA:30232"/>
    </physiologicalReaction>
</comment>
<comment type="catalytic activity">
    <reaction evidence="2">
        <text>[(2E,6E,10E)-geranylgeranyl]-L-cysteine + O2 + H2O = (2E,6E,10E)-geranylgeranial + L-cysteine + H2O2</text>
        <dbReference type="Rhea" id="RHEA:70407"/>
        <dbReference type="ChEBI" id="CHEBI:15377"/>
        <dbReference type="ChEBI" id="CHEBI:15379"/>
        <dbReference type="ChEBI" id="CHEBI:16240"/>
        <dbReference type="ChEBI" id="CHEBI:35235"/>
        <dbReference type="ChEBI" id="CHEBI:189549"/>
        <dbReference type="ChEBI" id="CHEBI:189554"/>
        <dbReference type="EC" id="1.8.3.5"/>
    </reaction>
    <physiologicalReaction direction="left-to-right" evidence="2">
        <dbReference type="Rhea" id="RHEA:70408"/>
    </physiologicalReaction>
</comment>
<comment type="cofactor">
    <cofactor evidence="2">
        <name>FAD</name>
        <dbReference type="ChEBI" id="CHEBI:57692"/>
    </cofactor>
</comment>
<comment type="subcellular location">
    <subcellularLocation>
        <location evidence="2">Lysosome</location>
    </subcellularLocation>
</comment>
<comment type="tissue specificity">
    <text evidence="4">Expressed mainly in cerebrum.</text>
</comment>
<comment type="similarity">
    <text evidence="6">Belongs to the prenylcysteine oxidase family.</text>
</comment>
<feature type="signal peptide" evidence="3">
    <location>
        <begin position="1"/>
        <end position="28"/>
    </location>
</feature>
<feature type="chain" id="PRO_0000023302" description="Prenylcysteine oxidase 1">
    <location>
        <begin position="29"/>
        <end position="504"/>
    </location>
</feature>
<feature type="glycosylation site" description="N-linked (GlcNAc...) asparagine" evidence="8">
    <location>
        <position position="196"/>
    </location>
</feature>
<feature type="glycosylation site" description="N-linked (GlcNAc...) asparagine" evidence="3">
    <location>
        <position position="322"/>
    </location>
</feature>
<feature type="glycosylation site" description="N-linked (GlcNAc...) asparagine" evidence="8">
    <location>
        <position position="352"/>
    </location>
</feature>
<protein>
    <recommendedName>
        <fullName evidence="6">Prenylcysteine oxidase 1</fullName>
        <ecNumber evidence="2">1.8.3.5</ecNumber>
    </recommendedName>
    <alternativeName>
        <fullName evidence="5">Chloride ion pump-associated 55 kDa protein</fullName>
    </alternativeName>
</protein>
<gene>
    <name evidence="7" type="primary">Pcyox1</name>
    <name evidence="5" type="synonym">Clp55</name>
</gene>
<organism>
    <name type="scientific">Rattus norvegicus</name>
    <name type="common">Rat</name>
    <dbReference type="NCBI Taxonomy" id="10116"/>
    <lineage>
        <taxon>Eukaryota</taxon>
        <taxon>Metazoa</taxon>
        <taxon>Chordata</taxon>
        <taxon>Craniata</taxon>
        <taxon>Vertebrata</taxon>
        <taxon>Euteleostomi</taxon>
        <taxon>Mammalia</taxon>
        <taxon>Eutheria</taxon>
        <taxon>Euarchontoglires</taxon>
        <taxon>Glires</taxon>
        <taxon>Rodentia</taxon>
        <taxon>Myomorpha</taxon>
        <taxon>Muroidea</taxon>
        <taxon>Muridae</taxon>
        <taxon>Murinae</taxon>
        <taxon>Rattus</taxon>
    </lineage>
</organism>
<evidence type="ECO:0000250" key="1">
    <source>
        <dbReference type="UniProtKB" id="F1N2K1"/>
    </source>
</evidence>
<evidence type="ECO:0000250" key="2">
    <source>
        <dbReference type="UniProtKB" id="Q9UHG3"/>
    </source>
</evidence>
<evidence type="ECO:0000255" key="3"/>
<evidence type="ECO:0000269" key="4">
    <source>
    </source>
</evidence>
<evidence type="ECO:0000303" key="5">
    <source>
    </source>
</evidence>
<evidence type="ECO:0000305" key="6"/>
<evidence type="ECO:0000312" key="7">
    <source>
        <dbReference type="RGD" id="628652"/>
    </source>
</evidence>
<evidence type="ECO:0007744" key="8">
    <source>
    </source>
</evidence>
<reference key="1">
    <citation type="journal article" date="2001" name="Biochem. Biophys. Res. Commun.">
        <title>Molecular cloning and characterization of the Cl(-) pump-associated 55-kDa protein in rat brain.</title>
        <authorList>
            <person name="Kitagawa K."/>
            <person name="Yagyu K."/>
            <person name="Yamamoto A."/>
            <person name="Hattori N."/>
            <person name="Omori K."/>
            <person name="Zeng X.-T."/>
            <person name="Inagaki C."/>
        </authorList>
    </citation>
    <scope>NUCLEOTIDE SEQUENCE [MRNA]</scope>
    <scope>TISSUE SPECIFICITY</scope>
    <source>
        <strain>Wistar</strain>
        <tissue>Brain</tissue>
    </source>
</reference>
<reference key="2">
    <citation type="journal article" date="2004" name="Genome Res.">
        <title>The status, quality, and expansion of the NIH full-length cDNA project: the Mammalian Gene Collection (MGC).</title>
        <authorList>
            <consortium name="The MGC Project Team"/>
        </authorList>
    </citation>
    <scope>NUCLEOTIDE SEQUENCE [LARGE SCALE MRNA]</scope>
    <source>
        <tissue>Kidney</tissue>
    </source>
</reference>
<reference key="3">
    <citation type="submission" date="2007-09" db="UniProtKB">
        <authorList>
            <person name="Lubec G."/>
            <person name="Kang S.U."/>
            <person name="Lubec S."/>
        </authorList>
    </citation>
    <scope>PROTEIN SEQUENCE OF 291-318 AND 420-429</scope>
    <scope>IDENTIFICATION BY MASS SPECTROMETRY</scope>
    <source>
        <strain>Sprague-Dawley</strain>
        <tissue>Brain</tissue>
    </source>
</reference>
<reference key="4">
    <citation type="journal article" date="2013" name="J. Proteome Res.">
        <title>Site-specific glycan-peptide analysis for determination of N-glycoproteome heterogeneity.</title>
        <authorList>
            <person name="Parker B.L."/>
            <person name="Thaysen-Andersen M."/>
            <person name="Solis N."/>
            <person name="Scott N.E."/>
            <person name="Larsen M.R."/>
            <person name="Graham M.E."/>
            <person name="Packer N.H."/>
            <person name="Cordwell S.J."/>
        </authorList>
    </citation>
    <scope>GLYCOSYLATION [LARGE SCALE ANALYSIS] AT ASN-196 AND ASN-352</scope>
    <scope>IDENTIFICATION BY MASS SPECTROMETRY [LARGE SCALE ANALYSIS]</scope>
    <source>
        <tissue>Brain</tissue>
    </source>
</reference>
<keyword id="KW-0903">Direct protein sequencing</keyword>
<keyword id="KW-0274">FAD</keyword>
<keyword id="KW-0285">Flavoprotein</keyword>
<keyword id="KW-0325">Glycoprotein</keyword>
<keyword id="KW-0458">Lysosome</keyword>
<keyword id="KW-0560">Oxidoreductase</keyword>
<keyword id="KW-1185">Reference proteome</keyword>
<keyword id="KW-0732">Signal</keyword>